<organism>
    <name type="scientific">Homo sapiens</name>
    <name type="common">Human</name>
    <dbReference type="NCBI Taxonomy" id="9606"/>
    <lineage>
        <taxon>Eukaryota</taxon>
        <taxon>Metazoa</taxon>
        <taxon>Chordata</taxon>
        <taxon>Craniata</taxon>
        <taxon>Vertebrata</taxon>
        <taxon>Euteleostomi</taxon>
        <taxon>Mammalia</taxon>
        <taxon>Eutheria</taxon>
        <taxon>Euarchontoglires</taxon>
        <taxon>Primates</taxon>
        <taxon>Haplorrhini</taxon>
        <taxon>Catarrhini</taxon>
        <taxon>Hominidae</taxon>
        <taxon>Homo</taxon>
    </lineage>
</organism>
<comment type="function">
    <text evidence="2 3">N5-glutamine methyltransferase responsible for the methylation of the glutamine residue in the universally conserved GGQ motif of the mitochondrial translation release factors MTRF1, MTRF1L, MRPL58/ICT1 and MTRFR.</text>
</comment>
<comment type="catalytic activity">
    <reaction evidence="3 6">
        <text>L-glutaminyl-[peptide chain release factor] + S-adenosyl-L-methionine = N(5)-methyl-L-glutaminyl-[peptide chain release factor] + S-adenosyl-L-homocysteine + H(+)</text>
        <dbReference type="Rhea" id="RHEA:42896"/>
        <dbReference type="Rhea" id="RHEA-COMP:10271"/>
        <dbReference type="Rhea" id="RHEA-COMP:10272"/>
        <dbReference type="ChEBI" id="CHEBI:15378"/>
        <dbReference type="ChEBI" id="CHEBI:30011"/>
        <dbReference type="ChEBI" id="CHEBI:57856"/>
        <dbReference type="ChEBI" id="CHEBI:59789"/>
        <dbReference type="ChEBI" id="CHEBI:61891"/>
        <dbReference type="EC" id="2.1.1.297"/>
    </reaction>
</comment>
<comment type="interaction">
    <interactant intactId="EBI-10329202">
        <id>Q9Y5R4</id>
    </interactant>
    <interactant intactId="EBI-357530">
        <id>Q9ULX6</id>
        <label>AKAP8L</label>
    </interactant>
    <organismsDiffer>false</organismsDiffer>
    <experiments>3</experiments>
</comment>
<comment type="interaction">
    <interactant intactId="EBI-10329202">
        <id>Q9Y5R4</id>
    </interactant>
    <interactant intactId="EBI-12108222">
        <id>Q9NQ33</id>
        <label>ASCL3</label>
    </interactant>
    <organismsDiffer>false</organismsDiffer>
    <experiments>3</experiments>
</comment>
<comment type="interaction">
    <interactant intactId="EBI-10329202">
        <id>Q9Y5R4</id>
    </interactant>
    <interactant intactId="EBI-396137">
        <id>Q9UJX2</id>
        <label>CDC23</label>
    </interactant>
    <organismsDiffer>false</organismsDiffer>
    <experiments>3</experiments>
</comment>
<comment type="interaction">
    <interactant intactId="EBI-10329202">
        <id>Q9Y5R4</id>
    </interactant>
    <interactant intactId="EBI-718947">
        <id>P15882</id>
        <label>CHN1</label>
    </interactant>
    <organismsDiffer>false</organismsDiffer>
    <experiments>8</experiments>
</comment>
<comment type="interaction">
    <interactant intactId="EBI-10329202">
        <id>Q9Y5R4</id>
    </interactant>
    <interactant intactId="EBI-1188472">
        <id>P78358</id>
        <label>CTAG1B</label>
    </interactant>
    <organismsDiffer>false</organismsDiffer>
    <experiments>3</experiments>
</comment>
<comment type="interaction">
    <interactant intactId="EBI-10329202">
        <id>Q9Y5R4</id>
    </interactant>
    <interactant intactId="EBI-724310">
        <id>Q15038</id>
        <label>DAZAP2</label>
    </interactant>
    <organismsDiffer>false</organismsDiffer>
    <experiments>3</experiments>
</comment>
<comment type="interaction">
    <interactant intactId="EBI-10329202">
        <id>Q9Y5R4</id>
    </interactant>
    <interactant intactId="EBI-13049042">
        <id>A2RTY3</id>
        <label>HEATR9</label>
    </interactant>
    <organismsDiffer>false</organismsDiffer>
    <experiments>3</experiments>
</comment>
<comment type="interaction">
    <interactant intactId="EBI-10329202">
        <id>Q9Y5R4</id>
    </interactant>
    <interactant intactId="EBI-6509505">
        <id>Q0VD86</id>
        <label>INCA1</label>
    </interactant>
    <organismsDiffer>false</organismsDiffer>
    <experiments>5</experiments>
</comment>
<comment type="interaction">
    <interactant intactId="EBI-10329202">
        <id>Q9Y5R4</id>
    </interactant>
    <interactant intactId="EBI-12811111">
        <id>Q8IUB9</id>
        <label>KRTAP19-1</label>
    </interactant>
    <organismsDiffer>false</organismsDiffer>
    <experiments>3</experiments>
</comment>
<comment type="interaction">
    <interactant intactId="EBI-10329202">
        <id>Q9Y5R4</id>
    </interactant>
    <interactant intactId="EBI-716006">
        <id>Q9Y5V3</id>
        <label>MAGED1</label>
    </interactant>
    <organismsDiffer>false</organismsDiffer>
    <experiments>3</experiments>
</comment>
<comment type="interaction">
    <interactant intactId="EBI-10329202">
        <id>Q9Y5R4</id>
    </interactant>
    <interactant intactId="EBI-724639">
        <id>Q9UBV8</id>
        <label>PEF1</label>
    </interactant>
    <organismsDiffer>false</organismsDiffer>
    <experiments>3</experiments>
</comment>
<comment type="interaction">
    <interactant intactId="EBI-10329202">
        <id>Q9Y5R4</id>
    </interactant>
    <interactant intactId="EBI-943588">
        <id>Q16633</id>
        <label>POU2AF1</label>
    </interactant>
    <organismsDiffer>false</organismsDiffer>
    <experiments>3</experiments>
</comment>
<comment type="interaction">
    <interactant intactId="EBI-10329202">
        <id>Q9Y5R4</id>
    </interactant>
    <interactant intactId="EBI-603350">
        <id>P28070</id>
        <label>PSMB4</label>
    </interactant>
    <organismsDiffer>false</organismsDiffer>
    <experiments>3</experiments>
</comment>
<comment type="interaction">
    <interactant intactId="EBI-10329202">
        <id>Q9Y5R4</id>
    </interactant>
    <interactant intactId="EBI-748621">
        <id>Q9UJW9</id>
        <label>SERTAD3</label>
    </interactant>
    <organismsDiffer>false</organismsDiffer>
    <experiments>3</experiments>
</comment>
<comment type="interaction">
    <interactant intactId="EBI-10329202">
        <id>Q9Y5R4</id>
    </interactant>
    <interactant intactId="EBI-12825957">
        <id>O15266-2</id>
        <label>SHOX</label>
    </interactant>
    <organismsDiffer>false</organismsDiffer>
    <experiments>3</experiments>
</comment>
<comment type="interaction">
    <interactant intactId="EBI-10329202">
        <id>Q9Y5R4</id>
    </interactant>
    <interactant intactId="EBI-12288855">
        <id>Q5JUK2</id>
        <label>SOHLH1</label>
    </interactant>
    <organismsDiffer>false</organismsDiffer>
    <experiments>3</experiments>
</comment>
<comment type="interaction">
    <interactant intactId="EBI-10329202">
        <id>Q9Y5R4</id>
    </interactant>
    <interactant intactId="EBI-11959123">
        <id>Q99932-2</id>
        <label>SPAG8</label>
    </interactant>
    <organismsDiffer>false</organismsDiffer>
    <experiments>3</experiments>
</comment>
<comment type="interaction">
    <interactant intactId="EBI-10329202">
        <id>Q9Y5R4</id>
    </interactant>
    <interactant intactId="EBI-12408727">
        <id>Q5W111-2</id>
        <label>SPRYD7</label>
    </interactant>
    <organismsDiffer>false</organismsDiffer>
    <experiments>3</experiments>
</comment>
<comment type="interaction">
    <interactant intactId="EBI-10329202">
        <id>Q9Y5R4</id>
    </interactant>
    <interactant intactId="EBI-2555061">
        <id>Q96RT8</id>
        <label>TUBGCP5</label>
    </interactant>
    <organismsDiffer>false</organismsDiffer>
    <experiments>3</experiments>
</comment>
<comment type="interaction">
    <interactant intactId="EBI-10329202">
        <id>Q9Y5R4</id>
    </interactant>
    <interactant intactId="EBI-947187">
        <id>Q9UHD9</id>
        <label>UBQLN2</label>
    </interactant>
    <organismsDiffer>false</organismsDiffer>
    <experiments>3</experiments>
</comment>
<comment type="subcellular location">
    <subcellularLocation>
        <location evidence="2">Mitochondrion</location>
    </subcellularLocation>
</comment>
<comment type="similarity">
    <text evidence="5">Belongs to the protein N5-glutamine methyltransferase family.</text>
</comment>
<proteinExistence type="evidence at protein level"/>
<dbReference type="EC" id="2.1.1.297" evidence="6"/>
<dbReference type="EMBL" id="AF131220">
    <property type="protein sequence ID" value="AAD26417.1"/>
    <property type="molecule type" value="mRNA"/>
</dbReference>
<dbReference type="EMBL" id="AF172244">
    <property type="protein sequence ID" value="AAD51328.1"/>
    <property type="molecule type" value="mRNA"/>
</dbReference>
<dbReference type="EMBL" id="BC000781">
    <property type="protein sequence ID" value="AAH00781.1"/>
    <property type="molecule type" value="mRNA"/>
</dbReference>
<dbReference type="CCDS" id="CCDS2830.1"/>
<dbReference type="RefSeq" id="NP_001304780.1">
    <property type="nucleotide sequence ID" value="NM_001317851.2"/>
</dbReference>
<dbReference type="RefSeq" id="NP_001364349.1">
    <property type="nucleotide sequence ID" value="NM_001377420.1"/>
</dbReference>
<dbReference type="RefSeq" id="NP_001364350.1">
    <property type="nucleotide sequence ID" value="NM_001377421.1"/>
</dbReference>
<dbReference type="RefSeq" id="NP_001364351.1">
    <property type="nucleotide sequence ID" value="NM_001377422.1"/>
</dbReference>
<dbReference type="RefSeq" id="NP_057257.1">
    <property type="nucleotide sequence ID" value="NM_016173.5"/>
</dbReference>
<dbReference type="RefSeq" id="XP_047304240.1">
    <property type="nucleotide sequence ID" value="XM_047448284.1"/>
</dbReference>
<dbReference type="RefSeq" id="XP_047304241.1">
    <property type="nucleotide sequence ID" value="XM_047448285.1"/>
</dbReference>
<dbReference type="RefSeq" id="XP_047304242.1">
    <property type="nucleotide sequence ID" value="XM_047448286.1"/>
</dbReference>
<dbReference type="SMR" id="Q9Y5R4"/>
<dbReference type="BioGRID" id="119527">
    <property type="interactions" value="35"/>
</dbReference>
<dbReference type="FunCoup" id="Q9Y5R4">
    <property type="interactions" value="305"/>
</dbReference>
<dbReference type="IntAct" id="Q9Y5R4">
    <property type="interactions" value="30"/>
</dbReference>
<dbReference type="STRING" id="9606.ENSP00000404843"/>
<dbReference type="iPTMnet" id="Q9Y5R4"/>
<dbReference type="PhosphoSitePlus" id="Q9Y5R4"/>
<dbReference type="BioMuta" id="HEMK1"/>
<dbReference type="DMDM" id="18203634"/>
<dbReference type="jPOST" id="Q9Y5R4"/>
<dbReference type="MassIVE" id="Q9Y5R4"/>
<dbReference type="PaxDb" id="9606-ENSP00000404843"/>
<dbReference type="PeptideAtlas" id="Q9Y5R4"/>
<dbReference type="ProteomicsDB" id="86481"/>
<dbReference type="Antibodypedia" id="30986">
    <property type="antibodies" value="163 antibodies from 21 providers"/>
</dbReference>
<dbReference type="DNASU" id="51409"/>
<dbReference type="Ensembl" id="ENST00000232854.9">
    <property type="protein sequence ID" value="ENSP00000232854.4"/>
    <property type="gene ID" value="ENSG00000114735.10"/>
</dbReference>
<dbReference type="Ensembl" id="ENST00000434410.5">
    <property type="protein sequence ID" value="ENSP00000404843.1"/>
    <property type="gene ID" value="ENSG00000114735.10"/>
</dbReference>
<dbReference type="Ensembl" id="ENST00000455834.5">
    <property type="protein sequence ID" value="ENSP00000404334.1"/>
    <property type="gene ID" value="ENSG00000114735.10"/>
</dbReference>
<dbReference type="GeneID" id="51409"/>
<dbReference type="KEGG" id="hsa:51409"/>
<dbReference type="MANE-Select" id="ENST00000232854.9">
    <property type="protein sequence ID" value="ENSP00000232854.4"/>
    <property type="RefSeq nucleotide sequence ID" value="NM_016173.5"/>
    <property type="RefSeq protein sequence ID" value="NP_057257.1"/>
</dbReference>
<dbReference type="UCSC" id="uc003dau.4">
    <property type="organism name" value="human"/>
</dbReference>
<dbReference type="AGR" id="HGNC:24923"/>
<dbReference type="CTD" id="51409"/>
<dbReference type="DisGeNET" id="51409"/>
<dbReference type="GeneCards" id="HEMK1"/>
<dbReference type="HGNC" id="HGNC:24923">
    <property type="gene designation" value="HEMK1"/>
</dbReference>
<dbReference type="HPA" id="ENSG00000114735">
    <property type="expression patterns" value="Low tissue specificity"/>
</dbReference>
<dbReference type="MIM" id="618609">
    <property type="type" value="gene"/>
</dbReference>
<dbReference type="neXtProt" id="NX_Q9Y5R4"/>
<dbReference type="OpenTargets" id="ENSG00000114735"/>
<dbReference type="PharmGKB" id="PA134884011"/>
<dbReference type="VEuPathDB" id="HostDB:ENSG00000114735"/>
<dbReference type="eggNOG" id="KOG2904">
    <property type="taxonomic scope" value="Eukaryota"/>
</dbReference>
<dbReference type="GeneTree" id="ENSGT00390000014125"/>
<dbReference type="HOGENOM" id="CLU_018398_4_1_1"/>
<dbReference type="InParanoid" id="Q9Y5R4"/>
<dbReference type="OMA" id="DFDARYW"/>
<dbReference type="OrthoDB" id="269872at2759"/>
<dbReference type="PAN-GO" id="Q9Y5R4">
    <property type="GO annotations" value="0 GO annotations based on evolutionary models"/>
</dbReference>
<dbReference type="PhylomeDB" id="Q9Y5R4"/>
<dbReference type="TreeFam" id="TF324423"/>
<dbReference type="BRENDA" id="2.1.1.297">
    <property type="organism ID" value="2681"/>
</dbReference>
<dbReference type="PathwayCommons" id="Q9Y5R4"/>
<dbReference type="SignaLink" id="Q9Y5R4"/>
<dbReference type="BioGRID-ORCS" id="51409">
    <property type="hits" value="10 hits in 1158 CRISPR screens"/>
</dbReference>
<dbReference type="GenomeRNAi" id="51409"/>
<dbReference type="Pharos" id="Q9Y5R4">
    <property type="development level" value="Tbio"/>
</dbReference>
<dbReference type="PRO" id="PR:Q9Y5R4"/>
<dbReference type="Proteomes" id="UP000005640">
    <property type="component" value="Chromosome 3"/>
</dbReference>
<dbReference type="RNAct" id="Q9Y5R4">
    <property type="molecule type" value="protein"/>
</dbReference>
<dbReference type="Bgee" id="ENSG00000114735">
    <property type="expression patterns" value="Expressed in right uterine tube and 181 other cell types or tissues"/>
</dbReference>
<dbReference type="ExpressionAtlas" id="Q9Y5R4">
    <property type="expression patterns" value="baseline and differential"/>
</dbReference>
<dbReference type="GO" id="GO:0005739">
    <property type="term" value="C:mitochondrion"/>
    <property type="evidence" value="ECO:0006056"/>
    <property type="project" value="FlyBase"/>
</dbReference>
<dbReference type="GO" id="GO:0003677">
    <property type="term" value="F:DNA binding"/>
    <property type="evidence" value="ECO:0007669"/>
    <property type="project" value="InterPro"/>
</dbReference>
<dbReference type="GO" id="GO:0102559">
    <property type="term" value="F:protein-(glutamine-N5) methyltransferase activity"/>
    <property type="evidence" value="ECO:0000314"/>
    <property type="project" value="UniProtKB"/>
</dbReference>
<dbReference type="GO" id="GO:0036009">
    <property type="term" value="F:protein-glutamine N-methyltransferase activity"/>
    <property type="evidence" value="ECO:0000318"/>
    <property type="project" value="GO_Central"/>
</dbReference>
<dbReference type="GO" id="GO:0032259">
    <property type="term" value="P:methylation"/>
    <property type="evidence" value="ECO:0007669"/>
    <property type="project" value="UniProtKB-KW"/>
</dbReference>
<dbReference type="GO" id="GO:0006415">
    <property type="term" value="P:translational termination"/>
    <property type="evidence" value="ECO:0000318"/>
    <property type="project" value="GO_Central"/>
</dbReference>
<dbReference type="CDD" id="cd02440">
    <property type="entry name" value="AdoMet_MTases"/>
    <property type="match status" value="1"/>
</dbReference>
<dbReference type="Gene3D" id="1.10.8.10">
    <property type="entry name" value="DNA helicase RuvA subunit, C-terminal domain"/>
    <property type="match status" value="1"/>
</dbReference>
<dbReference type="Gene3D" id="3.40.50.150">
    <property type="entry name" value="Vaccinia Virus protein VP39"/>
    <property type="match status" value="1"/>
</dbReference>
<dbReference type="InterPro" id="IPR002052">
    <property type="entry name" value="DNA_methylase_N6_adenine_CS"/>
</dbReference>
<dbReference type="InterPro" id="IPR004556">
    <property type="entry name" value="HemK-like"/>
</dbReference>
<dbReference type="InterPro" id="IPR002295">
    <property type="entry name" value="N4/N6-MTase_EcoPI_Mod-like"/>
</dbReference>
<dbReference type="InterPro" id="IPR050320">
    <property type="entry name" value="N5-glutamine_MTase"/>
</dbReference>
<dbReference type="InterPro" id="IPR040758">
    <property type="entry name" value="PrmC_N"/>
</dbReference>
<dbReference type="InterPro" id="IPR019874">
    <property type="entry name" value="RF_methyltr_PrmC"/>
</dbReference>
<dbReference type="InterPro" id="IPR029063">
    <property type="entry name" value="SAM-dependent_MTases_sf"/>
</dbReference>
<dbReference type="InterPro" id="IPR007848">
    <property type="entry name" value="Small_mtfrase_dom"/>
</dbReference>
<dbReference type="NCBIfam" id="TIGR00536">
    <property type="entry name" value="hemK_fam"/>
    <property type="match status" value="1"/>
</dbReference>
<dbReference type="NCBIfam" id="TIGR03534">
    <property type="entry name" value="RF_mod_PrmC"/>
    <property type="match status" value="1"/>
</dbReference>
<dbReference type="PANTHER" id="PTHR18895">
    <property type="entry name" value="HEMK METHYLTRANSFERASE"/>
    <property type="match status" value="1"/>
</dbReference>
<dbReference type="PANTHER" id="PTHR18895:SF74">
    <property type="entry name" value="MTRF1L RELEASE FACTOR GLUTAMINE METHYLTRANSFERASE"/>
    <property type="match status" value="1"/>
</dbReference>
<dbReference type="Pfam" id="PF05175">
    <property type="entry name" value="MTS"/>
    <property type="match status" value="1"/>
</dbReference>
<dbReference type="Pfam" id="PF17827">
    <property type="entry name" value="PrmC_N"/>
    <property type="match status" value="1"/>
</dbReference>
<dbReference type="PRINTS" id="PR00506">
    <property type="entry name" value="D21N6MTFRASE"/>
</dbReference>
<dbReference type="SUPFAM" id="SSF53335">
    <property type="entry name" value="S-adenosyl-L-methionine-dependent methyltransferases"/>
    <property type="match status" value="1"/>
</dbReference>
<dbReference type="PROSITE" id="PS00092">
    <property type="entry name" value="N6_MTASE"/>
    <property type="match status" value="1"/>
</dbReference>
<keyword id="KW-0489">Methyltransferase</keyword>
<keyword id="KW-0496">Mitochondrion</keyword>
<keyword id="KW-1267">Proteomics identification</keyword>
<keyword id="KW-1185">Reference proteome</keyword>
<keyword id="KW-0949">S-adenosyl-L-methionine</keyword>
<keyword id="KW-0808">Transferase</keyword>
<sequence length="338" mass="38231">MELWGRMLWALLSGPGRRGSTRGWAFSSWQPQPPLAGLSSAIELVSHWTGVFEKRGIPEARESSEYIVAHVLGAKTFQSLRPALWTQPLTSQQLQCIRELSSRRLQRMPVQYILGEWDFQGLSLRMVPPVFIPRPETEELVEWVLEEVAQRSHAVGSPGSPLILEVGCGSGAISLSLLSQLPQSRVIAVDKREAAISLTHENAQRLRLQDRIWIIHLDMTSERSWTHLPWGPMDLIVSNPPYVFHQDMEQLAPEIRSYEDPAALDGGEEGMDIITHILALAPRLLKDSGSIFLEVDPRHPELVSSWLQSRPDLYLNLVAVRRDFCGRPRFLHIRRSGP</sequence>
<gene>
    <name type="primary">HEMK1</name>
    <name type="synonym">HEMK</name>
</gene>
<evidence type="ECO:0000250" key="1"/>
<evidence type="ECO:0000269" key="2">
    <source>
    </source>
</evidence>
<evidence type="ECO:0000269" key="3">
    <source>
    </source>
</evidence>
<evidence type="ECO:0000303" key="4">
    <source>
    </source>
</evidence>
<evidence type="ECO:0000305" key="5"/>
<evidence type="ECO:0000305" key="6">
    <source>
    </source>
</evidence>
<accession>Q9Y5R4</accession>
<name>HEMK1_HUMAN</name>
<protein>
    <recommendedName>
        <fullName evidence="4">MTRF1L release factor glutamine methyltransferase</fullName>
        <ecNumber evidence="6">2.1.1.297</ecNumber>
    </recommendedName>
    <alternativeName>
        <fullName>HemK methyltransferase family member 1</fullName>
    </alternativeName>
    <alternativeName>
        <fullName>M.HsaHemKP</fullName>
    </alternativeName>
</protein>
<feature type="chain" id="PRO_0000157178" description="MTRF1L release factor glutamine methyltransferase">
    <location>
        <begin position="1"/>
        <end position="338"/>
    </location>
</feature>
<feature type="binding site" evidence="1">
    <location>
        <begin position="167"/>
        <end position="171"/>
    </location>
    <ligand>
        <name>S-adenosyl-L-methionine</name>
        <dbReference type="ChEBI" id="CHEBI:59789"/>
    </ligand>
</feature>
<feature type="binding site" evidence="1">
    <location>
        <position position="190"/>
    </location>
    <ligand>
        <name>S-adenosyl-L-methionine</name>
        <dbReference type="ChEBI" id="CHEBI:59789"/>
    </ligand>
</feature>
<feature type="binding site" evidence="1">
    <location>
        <position position="225"/>
    </location>
    <ligand>
        <name>S-adenosyl-L-methionine</name>
        <dbReference type="ChEBI" id="CHEBI:59789"/>
    </ligand>
</feature>
<feature type="binding site" evidence="1">
    <location>
        <begin position="239"/>
        <end position="242"/>
    </location>
    <ligand>
        <name>substrate</name>
    </ligand>
</feature>
<feature type="binding site" evidence="1">
    <location>
        <position position="239"/>
    </location>
    <ligand>
        <name>S-adenosyl-L-methionine</name>
        <dbReference type="ChEBI" id="CHEBI:59789"/>
    </ligand>
</feature>
<feature type="sequence variant" id="VAR_049503" description="In dbSNP:rs2232250.">
    <original>R</original>
    <variation>Q</variation>
    <location>
        <position position="192"/>
    </location>
</feature>
<feature type="sequence variant" id="VAR_049504" description="In dbSNP:rs2232251.">
    <original>H</original>
    <variation>Q</variation>
    <location>
        <position position="200"/>
    </location>
</feature>
<reference key="1">
    <citation type="submission" date="1999-02" db="EMBL/GenBank/DDBJ databases">
        <title>Human Hemk protein homolog located in the 3p21.3 homozygous deletion region is a candidate tumor suppressor gene.</title>
        <authorList>
            <person name="Zeng Y.G."/>
            <person name="Forgacs E."/>
            <person name="Lerman M.I."/>
            <person name="Minna J.D."/>
        </authorList>
    </citation>
    <scope>NUCLEOTIDE SEQUENCE [MRNA]</scope>
    <source>
        <tissue>Placenta</tissue>
    </source>
</reference>
<reference key="2">
    <citation type="journal article" date="2004" name="Genome Res.">
        <title>The status, quality, and expansion of the NIH full-length cDNA project: the Mammalian Gene Collection (MGC).</title>
        <authorList>
            <consortium name="The MGC Project Team"/>
        </authorList>
    </citation>
    <scope>NUCLEOTIDE SEQUENCE [LARGE SCALE MRNA]</scope>
    <source>
        <tissue>Placenta</tissue>
    </source>
</reference>
<reference key="3">
    <citation type="journal article" date="2008" name="Biochem. Biophys. Res. Commun.">
        <title>The human mitochondrial translation release factor HMRF1L is methylated in the GGQ motif by the methyltransferase HMPrmC.</title>
        <authorList>
            <person name="Ishizawa T."/>
            <person name="Nozaki Y."/>
            <person name="Ueda T."/>
            <person name="Takeuchi N."/>
        </authorList>
    </citation>
    <scope>FUNCTION</scope>
    <scope>SUBCELLULAR LOCATION</scope>
</reference>
<reference key="4">
    <citation type="journal article" date="2022" name="Sci. Rep.">
        <title>Mammalian HEMK1 methylates glutamine residue of the GGQ motif of mitochondrial release factors.</title>
        <authorList>
            <person name="Fang Q."/>
            <person name="Kimura Y."/>
            <person name="Shimazu T."/>
            <person name="Suzuki T."/>
            <person name="Yamada A."/>
            <person name="Dohmae N."/>
            <person name="Iwasaki S."/>
            <person name="Shinkai Y."/>
        </authorList>
    </citation>
    <scope>FUNCTION</scope>
    <scope>CATALYTIC ACTIVITY</scope>
</reference>